<proteinExistence type="inferred from homology"/>
<reference key="1">
    <citation type="journal article" date="2009" name="PLoS ONE">
        <title>Genome sequence of the endosymbiont Rickettsia peacockii and comparison with virulent Rickettsia rickettsii: identification of virulence factors.</title>
        <authorList>
            <person name="Felsheim R.F."/>
            <person name="Kurtti T.J."/>
            <person name="Munderloh U.G."/>
        </authorList>
    </citation>
    <scope>NUCLEOTIDE SEQUENCE [LARGE SCALE GENOMIC DNA]</scope>
    <source>
        <strain>Rustic</strain>
    </source>
</reference>
<comment type="catalytic activity">
    <reaction evidence="1">
        <text>tRNA(Arg) + L-arginine + ATP = L-arginyl-tRNA(Arg) + AMP + diphosphate</text>
        <dbReference type="Rhea" id="RHEA:20301"/>
        <dbReference type="Rhea" id="RHEA-COMP:9658"/>
        <dbReference type="Rhea" id="RHEA-COMP:9673"/>
        <dbReference type="ChEBI" id="CHEBI:30616"/>
        <dbReference type="ChEBI" id="CHEBI:32682"/>
        <dbReference type="ChEBI" id="CHEBI:33019"/>
        <dbReference type="ChEBI" id="CHEBI:78442"/>
        <dbReference type="ChEBI" id="CHEBI:78513"/>
        <dbReference type="ChEBI" id="CHEBI:456215"/>
        <dbReference type="EC" id="6.1.1.19"/>
    </reaction>
</comment>
<comment type="subunit">
    <text evidence="1">Monomer.</text>
</comment>
<comment type="subcellular location">
    <subcellularLocation>
        <location evidence="1">Cytoplasm</location>
    </subcellularLocation>
</comment>
<comment type="similarity">
    <text evidence="1">Belongs to the class-I aminoacyl-tRNA synthetase family.</text>
</comment>
<sequence>MNIFNQLKQDIIVASRQLYNNQEIANTATIEIPKDSFNGDLSSNVAMIIAAKESIAPREVALKFKEVLITLPYIASIEIAGPGFINFTIKADSWQASIKDILQHEEKFFEIDIDKSRNINIEYVSANPTGPMHIGHARGAVYGDVLARILQKVSYSVTKEYYVNDAGSQINDLVSTVLLRYKEALGEQITIPAGLYPGEYLIPLGQILAKEYGNKLLTMNYAERFKIVKSFAVEKMLDLNRKDLADLGIKHDIFFSEQSLHDKGEIEETVKLLERMGLIYEGTLPAPKGKIHEEWDNRVQKLFKSTKYGDSQDRPIEKADGSWSYFASDLAYAKDKIERGANHLIYVLGADHSGYVKRIEAIVKALGKEQVKVDVKICQLVNFVENGVPVKMSKRLGNFASVQDVNHEVGKDIIRFMMLTRQNDKPLDFDLVKVKEQSRENPIFYVQYAHVRTISILSKARELIPESYNNFESGKYDLSLLSSEEEIEIIKLLASWTKTLEASAKYFEPHRIAFYLINLASKFHSMWNFGKENSDYRFVIESNKELTLARLALASAIQKVIASGLEVIGVEPMNKM</sequence>
<feature type="chain" id="PRO_1000203105" description="Arginine--tRNA ligase">
    <location>
        <begin position="1"/>
        <end position="576"/>
    </location>
</feature>
<feature type="short sequence motif" description="'HIGH' region">
    <location>
        <begin position="126"/>
        <end position="136"/>
    </location>
</feature>
<dbReference type="EC" id="6.1.1.19" evidence="1"/>
<dbReference type="EMBL" id="CP001227">
    <property type="protein sequence ID" value="ACR47335.1"/>
    <property type="molecule type" value="Genomic_DNA"/>
</dbReference>
<dbReference type="RefSeq" id="WP_012736595.1">
    <property type="nucleotide sequence ID" value="NC_012730.1"/>
</dbReference>
<dbReference type="SMR" id="C4K184"/>
<dbReference type="KEGG" id="rpk:RPR_02565"/>
<dbReference type="HOGENOM" id="CLU_006406_0_1_5"/>
<dbReference type="Proteomes" id="UP000005015">
    <property type="component" value="Chromosome"/>
</dbReference>
<dbReference type="GO" id="GO:0005737">
    <property type="term" value="C:cytoplasm"/>
    <property type="evidence" value="ECO:0007669"/>
    <property type="project" value="UniProtKB-SubCell"/>
</dbReference>
<dbReference type="GO" id="GO:0004814">
    <property type="term" value="F:arginine-tRNA ligase activity"/>
    <property type="evidence" value="ECO:0007669"/>
    <property type="project" value="UniProtKB-UniRule"/>
</dbReference>
<dbReference type="GO" id="GO:0005524">
    <property type="term" value="F:ATP binding"/>
    <property type="evidence" value="ECO:0007669"/>
    <property type="project" value="UniProtKB-UniRule"/>
</dbReference>
<dbReference type="GO" id="GO:0006420">
    <property type="term" value="P:arginyl-tRNA aminoacylation"/>
    <property type="evidence" value="ECO:0007669"/>
    <property type="project" value="UniProtKB-UniRule"/>
</dbReference>
<dbReference type="CDD" id="cd00671">
    <property type="entry name" value="ArgRS_core"/>
    <property type="match status" value="1"/>
</dbReference>
<dbReference type="Gene3D" id="3.30.1360.70">
    <property type="entry name" value="Arginyl tRNA synthetase N-terminal domain"/>
    <property type="match status" value="1"/>
</dbReference>
<dbReference type="Gene3D" id="3.40.50.620">
    <property type="entry name" value="HUPs"/>
    <property type="match status" value="1"/>
</dbReference>
<dbReference type="Gene3D" id="1.10.730.10">
    <property type="entry name" value="Isoleucyl-tRNA Synthetase, Domain 1"/>
    <property type="match status" value="1"/>
</dbReference>
<dbReference type="HAMAP" id="MF_00123">
    <property type="entry name" value="Arg_tRNA_synth"/>
    <property type="match status" value="1"/>
</dbReference>
<dbReference type="InterPro" id="IPR001412">
    <property type="entry name" value="aa-tRNA-synth_I_CS"/>
</dbReference>
<dbReference type="InterPro" id="IPR001278">
    <property type="entry name" value="Arg-tRNA-ligase"/>
</dbReference>
<dbReference type="InterPro" id="IPR005148">
    <property type="entry name" value="Arg-tRNA-synth_N"/>
</dbReference>
<dbReference type="InterPro" id="IPR036695">
    <property type="entry name" value="Arg-tRNA-synth_N_sf"/>
</dbReference>
<dbReference type="InterPro" id="IPR035684">
    <property type="entry name" value="ArgRS_core"/>
</dbReference>
<dbReference type="InterPro" id="IPR008909">
    <property type="entry name" value="DALR_anticod-bd"/>
</dbReference>
<dbReference type="InterPro" id="IPR014729">
    <property type="entry name" value="Rossmann-like_a/b/a_fold"/>
</dbReference>
<dbReference type="InterPro" id="IPR009080">
    <property type="entry name" value="tRNAsynth_Ia_anticodon-bd"/>
</dbReference>
<dbReference type="NCBIfam" id="TIGR00456">
    <property type="entry name" value="argS"/>
    <property type="match status" value="1"/>
</dbReference>
<dbReference type="PANTHER" id="PTHR11956:SF5">
    <property type="entry name" value="ARGININE--TRNA LIGASE, CYTOPLASMIC"/>
    <property type="match status" value="1"/>
</dbReference>
<dbReference type="PANTHER" id="PTHR11956">
    <property type="entry name" value="ARGINYL-TRNA SYNTHETASE"/>
    <property type="match status" value="1"/>
</dbReference>
<dbReference type="Pfam" id="PF03485">
    <property type="entry name" value="Arg_tRNA_synt_N"/>
    <property type="match status" value="1"/>
</dbReference>
<dbReference type="Pfam" id="PF05746">
    <property type="entry name" value="DALR_1"/>
    <property type="match status" value="1"/>
</dbReference>
<dbReference type="Pfam" id="PF00750">
    <property type="entry name" value="tRNA-synt_1d"/>
    <property type="match status" value="1"/>
</dbReference>
<dbReference type="PRINTS" id="PR01038">
    <property type="entry name" value="TRNASYNTHARG"/>
</dbReference>
<dbReference type="SMART" id="SM01016">
    <property type="entry name" value="Arg_tRNA_synt_N"/>
    <property type="match status" value="1"/>
</dbReference>
<dbReference type="SMART" id="SM00836">
    <property type="entry name" value="DALR_1"/>
    <property type="match status" value="1"/>
</dbReference>
<dbReference type="SUPFAM" id="SSF47323">
    <property type="entry name" value="Anticodon-binding domain of a subclass of class I aminoacyl-tRNA synthetases"/>
    <property type="match status" value="1"/>
</dbReference>
<dbReference type="SUPFAM" id="SSF55190">
    <property type="entry name" value="Arginyl-tRNA synthetase (ArgRS), N-terminal 'additional' domain"/>
    <property type="match status" value="1"/>
</dbReference>
<dbReference type="SUPFAM" id="SSF52374">
    <property type="entry name" value="Nucleotidylyl transferase"/>
    <property type="match status" value="1"/>
</dbReference>
<dbReference type="PROSITE" id="PS00178">
    <property type="entry name" value="AA_TRNA_LIGASE_I"/>
    <property type="match status" value="1"/>
</dbReference>
<name>SYR_RICPU</name>
<keyword id="KW-0030">Aminoacyl-tRNA synthetase</keyword>
<keyword id="KW-0067">ATP-binding</keyword>
<keyword id="KW-0963">Cytoplasm</keyword>
<keyword id="KW-0436">Ligase</keyword>
<keyword id="KW-0547">Nucleotide-binding</keyword>
<keyword id="KW-0648">Protein biosynthesis</keyword>
<organism>
    <name type="scientific">Rickettsia peacockii (strain Rustic)</name>
    <dbReference type="NCBI Taxonomy" id="562019"/>
    <lineage>
        <taxon>Bacteria</taxon>
        <taxon>Pseudomonadati</taxon>
        <taxon>Pseudomonadota</taxon>
        <taxon>Alphaproteobacteria</taxon>
        <taxon>Rickettsiales</taxon>
        <taxon>Rickettsiaceae</taxon>
        <taxon>Rickettsieae</taxon>
        <taxon>Rickettsia</taxon>
        <taxon>spotted fever group</taxon>
    </lineage>
</organism>
<protein>
    <recommendedName>
        <fullName evidence="1">Arginine--tRNA ligase</fullName>
        <ecNumber evidence="1">6.1.1.19</ecNumber>
    </recommendedName>
    <alternativeName>
        <fullName evidence="1">Arginyl-tRNA synthetase</fullName>
        <shortName evidence="1">ArgRS</shortName>
    </alternativeName>
</protein>
<gene>
    <name evidence="1" type="primary">argS</name>
    <name type="ordered locus">RPR_02565</name>
</gene>
<accession>C4K184</accession>
<evidence type="ECO:0000255" key="1">
    <source>
        <dbReference type="HAMAP-Rule" id="MF_00123"/>
    </source>
</evidence>